<name>HJC_METJA</name>
<feature type="chain" id="PRO_0000106899" description="Crossover junction endodeoxyribonuclease Hjc">
    <location>
        <begin position="1"/>
        <end position="133"/>
    </location>
</feature>
<feature type="active site" evidence="2">
    <location>
        <position position="32"/>
    </location>
</feature>
<feature type="binding site" evidence="2">
    <location>
        <position position="12"/>
    </location>
    <ligand>
        <name>Mg(2+)</name>
        <dbReference type="ChEBI" id="CHEBI:18420"/>
    </ligand>
</feature>
<feature type="binding site" evidence="2">
    <location>
        <position position="36"/>
    </location>
    <ligand>
        <name>Mg(2+)</name>
        <dbReference type="ChEBI" id="CHEBI:18420"/>
    </ligand>
</feature>
<feature type="binding site" evidence="2">
    <location>
        <position position="49"/>
    </location>
    <ligand>
        <name>Mg(2+)</name>
        <dbReference type="ChEBI" id="CHEBI:18420"/>
    </ligand>
</feature>
<feature type="site" description="Transition state stabilizer" evidence="1">
    <location>
        <position position="51"/>
    </location>
</feature>
<organism>
    <name type="scientific">Methanocaldococcus jannaschii (strain ATCC 43067 / DSM 2661 / JAL-1 / JCM 10045 / NBRC 100440)</name>
    <name type="common">Methanococcus jannaschii</name>
    <dbReference type="NCBI Taxonomy" id="243232"/>
    <lineage>
        <taxon>Archaea</taxon>
        <taxon>Methanobacteriati</taxon>
        <taxon>Methanobacteriota</taxon>
        <taxon>Methanomada group</taxon>
        <taxon>Methanococci</taxon>
        <taxon>Methanococcales</taxon>
        <taxon>Methanocaldococcaceae</taxon>
        <taxon>Methanocaldococcus</taxon>
    </lineage>
</organism>
<reference key="1">
    <citation type="journal article" date="1996" name="Science">
        <title>Complete genome sequence of the methanogenic archaeon, Methanococcus jannaschii.</title>
        <authorList>
            <person name="Bult C.J."/>
            <person name="White O."/>
            <person name="Olsen G.J."/>
            <person name="Zhou L."/>
            <person name="Fleischmann R.D."/>
            <person name="Sutton G.G."/>
            <person name="Blake J.A."/>
            <person name="FitzGerald L.M."/>
            <person name="Clayton R.A."/>
            <person name="Gocayne J.D."/>
            <person name="Kerlavage A.R."/>
            <person name="Dougherty B.A."/>
            <person name="Tomb J.-F."/>
            <person name="Adams M.D."/>
            <person name="Reich C.I."/>
            <person name="Overbeek R."/>
            <person name="Kirkness E.F."/>
            <person name="Weinstock K.G."/>
            <person name="Merrick J.M."/>
            <person name="Glodek A."/>
            <person name="Scott J.L."/>
            <person name="Geoghagen N.S.M."/>
            <person name="Weidman J.F."/>
            <person name="Fuhrmann J.L."/>
            <person name="Nguyen D."/>
            <person name="Utterback T.R."/>
            <person name="Kelley J.M."/>
            <person name="Peterson J.D."/>
            <person name="Sadow P.W."/>
            <person name="Hanna M.C."/>
            <person name="Cotton M.D."/>
            <person name="Roberts K.M."/>
            <person name="Hurst M.A."/>
            <person name="Kaine B.P."/>
            <person name="Borodovsky M."/>
            <person name="Klenk H.-P."/>
            <person name="Fraser C.M."/>
            <person name="Smith H.O."/>
            <person name="Woese C.R."/>
            <person name="Venter J.C."/>
        </authorList>
    </citation>
    <scope>NUCLEOTIDE SEQUENCE [LARGE SCALE GENOMIC DNA]</scope>
    <source>
        <strain>ATCC 43067 / DSM 2661 / JAL-1 / JCM 10045 / NBRC 100440</strain>
    </source>
</reference>
<evidence type="ECO:0000255" key="1"/>
<evidence type="ECO:0000255" key="2">
    <source>
        <dbReference type="HAMAP-Rule" id="MF_01490"/>
    </source>
</evidence>
<dbReference type="EC" id="3.1.21.10" evidence="2"/>
<dbReference type="EMBL" id="L77117">
    <property type="protein sequence ID" value="AAB98490.1"/>
    <property type="molecule type" value="Genomic_DNA"/>
</dbReference>
<dbReference type="PIR" id="A64362">
    <property type="entry name" value="A64362"/>
</dbReference>
<dbReference type="RefSeq" id="WP_010869998.1">
    <property type="nucleotide sequence ID" value="NC_000909.1"/>
</dbReference>
<dbReference type="SMR" id="Q57920"/>
<dbReference type="STRING" id="243232.MJ_0497"/>
<dbReference type="PaxDb" id="243232-MJ_0497"/>
<dbReference type="EnsemblBacteria" id="AAB98490">
    <property type="protein sequence ID" value="AAB98490"/>
    <property type="gene ID" value="MJ_0497"/>
</dbReference>
<dbReference type="GeneID" id="1451359"/>
<dbReference type="KEGG" id="mja:MJ_0497"/>
<dbReference type="eggNOG" id="arCOG00919">
    <property type="taxonomic scope" value="Archaea"/>
</dbReference>
<dbReference type="HOGENOM" id="CLU_139546_2_0_2"/>
<dbReference type="InParanoid" id="Q57920"/>
<dbReference type="OrthoDB" id="34330at2157"/>
<dbReference type="PhylomeDB" id="Q57920"/>
<dbReference type="Proteomes" id="UP000000805">
    <property type="component" value="Chromosome"/>
</dbReference>
<dbReference type="GO" id="GO:0008821">
    <property type="term" value="F:crossover junction DNA endonuclease activity"/>
    <property type="evidence" value="ECO:0007669"/>
    <property type="project" value="UniProtKB-UniRule"/>
</dbReference>
<dbReference type="GO" id="GO:0003677">
    <property type="term" value="F:DNA binding"/>
    <property type="evidence" value="ECO:0007669"/>
    <property type="project" value="UniProtKB-KW"/>
</dbReference>
<dbReference type="GO" id="GO:0000287">
    <property type="term" value="F:magnesium ion binding"/>
    <property type="evidence" value="ECO:0007669"/>
    <property type="project" value="UniProtKB-UniRule"/>
</dbReference>
<dbReference type="GO" id="GO:0006310">
    <property type="term" value="P:DNA recombination"/>
    <property type="evidence" value="ECO:0007669"/>
    <property type="project" value="UniProtKB-UniRule"/>
</dbReference>
<dbReference type="GO" id="GO:0006281">
    <property type="term" value="P:DNA repair"/>
    <property type="evidence" value="ECO:0007669"/>
    <property type="project" value="UniProtKB-UniRule"/>
</dbReference>
<dbReference type="CDD" id="cd00523">
    <property type="entry name" value="Holliday_junction_resolvase"/>
    <property type="match status" value="1"/>
</dbReference>
<dbReference type="Gene3D" id="3.40.1350.10">
    <property type="match status" value="1"/>
</dbReference>
<dbReference type="HAMAP" id="MF_01490">
    <property type="entry name" value="HJ_Resolv_Hjc"/>
    <property type="match status" value="1"/>
</dbReference>
<dbReference type="InterPro" id="IPR002732">
    <property type="entry name" value="Hjc"/>
</dbReference>
<dbReference type="InterPro" id="IPR014428">
    <property type="entry name" value="Hjc_arc"/>
</dbReference>
<dbReference type="InterPro" id="IPR011335">
    <property type="entry name" value="Restrct_endonuc-II-like"/>
</dbReference>
<dbReference type="InterPro" id="IPR011856">
    <property type="entry name" value="tRNA_endonuc-like_dom_sf"/>
</dbReference>
<dbReference type="NCBIfam" id="NF040854">
    <property type="entry name" value="Hol_resolv_Hjc"/>
    <property type="match status" value="1"/>
</dbReference>
<dbReference type="PANTHER" id="PTHR39651">
    <property type="entry name" value="HOLLIDAY JUNCTION RESOLVASE HJC"/>
    <property type="match status" value="1"/>
</dbReference>
<dbReference type="PANTHER" id="PTHR39651:SF1">
    <property type="entry name" value="HOLLIDAY JUNCTION RESOLVASE HJC"/>
    <property type="match status" value="1"/>
</dbReference>
<dbReference type="Pfam" id="PF01870">
    <property type="entry name" value="Hjc"/>
    <property type="match status" value="1"/>
</dbReference>
<dbReference type="PIRSF" id="PIRSF004985">
    <property type="entry name" value="Hlld_jn_rslvs_ar"/>
    <property type="match status" value="1"/>
</dbReference>
<dbReference type="SUPFAM" id="SSF52980">
    <property type="entry name" value="Restriction endonuclease-like"/>
    <property type="match status" value="1"/>
</dbReference>
<protein>
    <recommendedName>
        <fullName evidence="2">Crossover junction endodeoxyribonuclease Hjc</fullName>
        <shortName evidence="2">Hjc</shortName>
        <ecNumber evidence="2">3.1.21.10</ecNumber>
    </recommendedName>
    <alternativeName>
        <fullName evidence="2">Holliday junction resolvase Hjc</fullName>
    </alternativeName>
</protein>
<proteinExistence type="inferred from homology"/>
<keyword id="KW-0227">DNA damage</keyword>
<keyword id="KW-0233">DNA recombination</keyword>
<keyword id="KW-0234">DNA repair</keyword>
<keyword id="KW-0238">DNA-binding</keyword>
<keyword id="KW-0255">Endonuclease</keyword>
<keyword id="KW-0378">Hydrolase</keyword>
<keyword id="KW-0460">Magnesium</keyword>
<keyword id="KW-0479">Metal-binding</keyword>
<keyword id="KW-0540">Nuclease</keyword>
<keyword id="KW-1185">Reference proteome</keyword>
<comment type="function">
    <text evidence="2">A structure-specific endonuclease that resolves Holliday junction (HJ) intermediates during genetic recombination. Cleaves 4-way DNA junctions introducing paired nicks in opposing strands, leaving a 5'-terminal phosphate and a 3'-terminal hydroxyl group that are subsequently ligated to produce recombinant products.</text>
</comment>
<comment type="catalytic activity">
    <reaction evidence="2">
        <text>Endonucleolytic cleavage at a junction such as a reciprocal single-stranded crossover between two homologous DNA duplexes (Holliday junction).</text>
        <dbReference type="EC" id="3.1.21.10"/>
    </reaction>
</comment>
<comment type="cofactor">
    <cofactor evidence="2">
        <name>Mg(2+)</name>
        <dbReference type="ChEBI" id="CHEBI:18420"/>
    </cofactor>
    <text evidence="2">Binds 1 Mg(2+) ion per subunit.</text>
</comment>
<comment type="subunit">
    <text evidence="2">Homodimer.</text>
</comment>
<comment type="similarity">
    <text evidence="2">Belongs to the Holliday junction resolvase Hjc family.</text>
</comment>
<accession>Q57920</accession>
<sequence>MRHKYRKGSSFERELKRLLEKEGFAVIRSAGSKGVDLIAGRKGEVLIFECKTSSKTKFYINKEDIEKLISFSEIFGGKPYLAIKFNGEMLFINPFLLSTNGKNYVIDERIKAIAIDFYEVIGRGKQLKIDDLI</sequence>
<gene>
    <name evidence="2" type="primary">hjc</name>
    <name type="ordered locus">MJ0497</name>
</gene>